<name>LCMT1_KLULA</name>
<accession>Q6CWW0</accession>
<feature type="chain" id="PRO_0000226130" description="Leucine carboxyl methyltransferase 1">
    <location>
        <begin position="1"/>
        <end position="333"/>
    </location>
</feature>
<feature type="binding site" evidence="1">
    <location>
        <position position="79"/>
    </location>
    <ligand>
        <name>S-adenosyl-L-methionine</name>
        <dbReference type="ChEBI" id="CHEBI:59789"/>
    </ligand>
</feature>
<feature type="binding site" evidence="1">
    <location>
        <position position="108"/>
    </location>
    <ligand>
        <name>S-adenosyl-L-methionine</name>
        <dbReference type="ChEBI" id="CHEBI:59789"/>
    </ligand>
</feature>
<feature type="binding site" evidence="1">
    <location>
        <position position="131"/>
    </location>
    <ligand>
        <name>S-adenosyl-L-methionine</name>
        <dbReference type="ChEBI" id="CHEBI:59789"/>
    </ligand>
</feature>
<feature type="binding site" evidence="1">
    <location>
        <begin position="180"/>
        <end position="181"/>
    </location>
    <ligand>
        <name>S-adenosyl-L-methionine</name>
        <dbReference type="ChEBI" id="CHEBI:59789"/>
    </ligand>
</feature>
<feature type="binding site" evidence="1">
    <location>
        <position position="206"/>
    </location>
    <ligand>
        <name>S-adenosyl-L-methionine</name>
        <dbReference type="ChEBI" id="CHEBI:59789"/>
    </ligand>
</feature>
<organism>
    <name type="scientific">Kluyveromyces lactis (strain ATCC 8585 / CBS 2359 / DSM 70799 / NBRC 1267 / NRRL Y-1140 / WM37)</name>
    <name type="common">Yeast</name>
    <name type="synonym">Candida sphaerica</name>
    <dbReference type="NCBI Taxonomy" id="284590"/>
    <lineage>
        <taxon>Eukaryota</taxon>
        <taxon>Fungi</taxon>
        <taxon>Dikarya</taxon>
        <taxon>Ascomycota</taxon>
        <taxon>Saccharomycotina</taxon>
        <taxon>Saccharomycetes</taxon>
        <taxon>Saccharomycetales</taxon>
        <taxon>Saccharomycetaceae</taxon>
        <taxon>Kluyveromyces</taxon>
    </lineage>
</organism>
<sequence length="333" mass="38811">MERVIQETDNDAFSCKISAITKRYLPSSEQKKIGNYEHYEDIHLEFCKEIKSRSRRKYANITKACRHSLPVMNYGTYLRTVSIDLKLTQWLKNNLENPADKVQVINLGCGSDLRMMTFLASFPGVQWLDLDYKDVVTFKSTILRSNAKFRASLQIEGDLPEEPSSIENVITDRYQLLPCNVTDDEQLIPILKKYTDFSVPAVILTECVLCYLHESKASQLISTVTGLYKQGYWISYDPIGGSQTNDRFGSIMQDNLMESRQLSMPTLMVFNSEDKYKERFPGKSEIQTMWDYYQNHLEDSERQRLKTLQFLDEIEELQVIFSHYVICTTNWRI</sequence>
<protein>
    <recommendedName>
        <fullName>Leucine carboxyl methyltransferase 1</fullName>
        <ecNumber>2.1.1.233</ecNumber>
    </recommendedName>
    <alternativeName>
        <fullName>Protein phosphatase methyltransferase 1</fullName>
    </alternativeName>
    <alternativeName>
        <fullName>[Phosphatase 2A protein]-leucine-carboxy methyltransferase 1</fullName>
    </alternativeName>
</protein>
<keyword id="KW-0489">Methyltransferase</keyword>
<keyword id="KW-1185">Reference proteome</keyword>
<keyword id="KW-0949">S-adenosyl-L-methionine</keyword>
<keyword id="KW-0808">Transferase</keyword>
<gene>
    <name type="primary">PPM1</name>
    <name type="ordered locus">KLLA0B01089g</name>
</gene>
<evidence type="ECO:0000250" key="1"/>
<evidence type="ECO:0000305" key="2"/>
<reference key="1">
    <citation type="journal article" date="2004" name="Nature">
        <title>Genome evolution in yeasts.</title>
        <authorList>
            <person name="Dujon B."/>
            <person name="Sherman D."/>
            <person name="Fischer G."/>
            <person name="Durrens P."/>
            <person name="Casaregola S."/>
            <person name="Lafontaine I."/>
            <person name="de Montigny J."/>
            <person name="Marck C."/>
            <person name="Neuveglise C."/>
            <person name="Talla E."/>
            <person name="Goffard N."/>
            <person name="Frangeul L."/>
            <person name="Aigle M."/>
            <person name="Anthouard V."/>
            <person name="Babour A."/>
            <person name="Barbe V."/>
            <person name="Barnay S."/>
            <person name="Blanchin S."/>
            <person name="Beckerich J.-M."/>
            <person name="Beyne E."/>
            <person name="Bleykasten C."/>
            <person name="Boisrame A."/>
            <person name="Boyer J."/>
            <person name="Cattolico L."/>
            <person name="Confanioleri F."/>
            <person name="de Daruvar A."/>
            <person name="Despons L."/>
            <person name="Fabre E."/>
            <person name="Fairhead C."/>
            <person name="Ferry-Dumazet H."/>
            <person name="Groppi A."/>
            <person name="Hantraye F."/>
            <person name="Hennequin C."/>
            <person name="Jauniaux N."/>
            <person name="Joyet P."/>
            <person name="Kachouri R."/>
            <person name="Kerrest A."/>
            <person name="Koszul R."/>
            <person name="Lemaire M."/>
            <person name="Lesur I."/>
            <person name="Ma L."/>
            <person name="Muller H."/>
            <person name="Nicaud J.-M."/>
            <person name="Nikolski M."/>
            <person name="Oztas S."/>
            <person name="Ozier-Kalogeropoulos O."/>
            <person name="Pellenz S."/>
            <person name="Potier S."/>
            <person name="Richard G.-F."/>
            <person name="Straub M.-L."/>
            <person name="Suleau A."/>
            <person name="Swennen D."/>
            <person name="Tekaia F."/>
            <person name="Wesolowski-Louvel M."/>
            <person name="Westhof E."/>
            <person name="Wirth B."/>
            <person name="Zeniou-Meyer M."/>
            <person name="Zivanovic Y."/>
            <person name="Bolotin-Fukuhara M."/>
            <person name="Thierry A."/>
            <person name="Bouchier C."/>
            <person name="Caudron B."/>
            <person name="Scarpelli C."/>
            <person name="Gaillardin C."/>
            <person name="Weissenbach J."/>
            <person name="Wincker P."/>
            <person name="Souciet J.-L."/>
        </authorList>
    </citation>
    <scope>NUCLEOTIDE SEQUENCE [LARGE SCALE GENOMIC DNA]</scope>
    <source>
        <strain>ATCC 8585 / CBS 2359 / DSM 70799 / NBRC 1267 / NRRL Y-1140 / WM37</strain>
    </source>
</reference>
<comment type="function">
    <text evidence="1">Methylates the carboxyl group of the C-terminal leucine residue of protein phosphatase 2A catalytic subunits to form alpha-leucine ester residues.</text>
</comment>
<comment type="catalytic activity">
    <reaction>
        <text>[phosphatase 2A protein]-C-terminal L-leucine + S-adenosyl-L-methionine = [phosphatase 2A protein]-C-terminal L-leucine methyl ester + S-adenosyl-L-homocysteine</text>
        <dbReference type="Rhea" id="RHEA:48544"/>
        <dbReference type="Rhea" id="RHEA-COMP:12134"/>
        <dbReference type="Rhea" id="RHEA-COMP:12135"/>
        <dbReference type="ChEBI" id="CHEBI:57856"/>
        <dbReference type="ChEBI" id="CHEBI:59789"/>
        <dbReference type="ChEBI" id="CHEBI:90516"/>
        <dbReference type="ChEBI" id="CHEBI:90517"/>
        <dbReference type="EC" id="2.1.1.233"/>
    </reaction>
</comment>
<comment type="similarity">
    <text evidence="2">Belongs to the methyltransferase superfamily. LCMT family.</text>
</comment>
<dbReference type="EC" id="2.1.1.233"/>
<dbReference type="EMBL" id="CR382122">
    <property type="protein sequence ID" value="CAH01972.1"/>
    <property type="molecule type" value="Genomic_DNA"/>
</dbReference>
<dbReference type="RefSeq" id="XP_451579.1">
    <property type="nucleotide sequence ID" value="XM_451579.1"/>
</dbReference>
<dbReference type="SMR" id="Q6CWW0"/>
<dbReference type="FunCoup" id="Q6CWW0">
    <property type="interactions" value="573"/>
</dbReference>
<dbReference type="STRING" id="284590.Q6CWW0"/>
<dbReference type="PaxDb" id="284590-Q6CWW0"/>
<dbReference type="KEGG" id="kla:KLLA0_B01089g"/>
<dbReference type="eggNOG" id="KOG2918">
    <property type="taxonomic scope" value="Eukaryota"/>
</dbReference>
<dbReference type="HOGENOM" id="CLU_031312_1_0_1"/>
<dbReference type="InParanoid" id="Q6CWW0"/>
<dbReference type="OMA" id="IIYEPIR"/>
<dbReference type="Proteomes" id="UP000000598">
    <property type="component" value="Chromosome B"/>
</dbReference>
<dbReference type="GO" id="GO:0018423">
    <property type="term" value="F:protein C-terminal leucine carboxyl O-methyltransferase activity"/>
    <property type="evidence" value="ECO:0007669"/>
    <property type="project" value="UniProtKB-EC"/>
</dbReference>
<dbReference type="GO" id="GO:0032259">
    <property type="term" value="P:methylation"/>
    <property type="evidence" value="ECO:0007669"/>
    <property type="project" value="UniProtKB-KW"/>
</dbReference>
<dbReference type="Gene3D" id="3.40.50.150">
    <property type="entry name" value="Vaccinia Virus protein VP39"/>
    <property type="match status" value="1"/>
</dbReference>
<dbReference type="InterPro" id="IPR016651">
    <property type="entry name" value="LCMT1"/>
</dbReference>
<dbReference type="InterPro" id="IPR007213">
    <property type="entry name" value="Ppm1/Ppm2/Tcmp"/>
</dbReference>
<dbReference type="InterPro" id="IPR029063">
    <property type="entry name" value="SAM-dependent_MTases_sf"/>
</dbReference>
<dbReference type="PANTHER" id="PTHR13600">
    <property type="entry name" value="LEUCINE CARBOXYL METHYLTRANSFERASE"/>
    <property type="match status" value="1"/>
</dbReference>
<dbReference type="PANTHER" id="PTHR13600:SF21">
    <property type="entry name" value="LEUCINE CARBOXYL METHYLTRANSFERASE 1"/>
    <property type="match status" value="1"/>
</dbReference>
<dbReference type="Pfam" id="PF04072">
    <property type="entry name" value="LCM"/>
    <property type="match status" value="1"/>
</dbReference>
<dbReference type="PIRSF" id="PIRSF016305">
    <property type="entry name" value="LCM_mtfrase"/>
    <property type="match status" value="1"/>
</dbReference>
<dbReference type="SUPFAM" id="SSF53335">
    <property type="entry name" value="S-adenosyl-L-methionine-dependent methyltransferases"/>
    <property type="match status" value="1"/>
</dbReference>
<proteinExistence type="inferred from homology"/>